<dbReference type="EMBL" id="BA000003">
    <property type="protein sequence ID" value="BAB13277.1"/>
    <property type="molecule type" value="Genomic_DNA"/>
</dbReference>
<dbReference type="RefSeq" id="NP_240391.1">
    <property type="nucleotide sequence ID" value="NC_002528.1"/>
</dbReference>
<dbReference type="RefSeq" id="WP_010896179.1">
    <property type="nucleotide sequence ID" value="NC_002528.1"/>
</dbReference>
<dbReference type="SMR" id="P57648"/>
<dbReference type="EnsemblBacteria" id="BAB13277">
    <property type="protein sequence ID" value="BAB13277"/>
    <property type="gene ID" value="BAB13277"/>
</dbReference>
<dbReference type="KEGG" id="buc:BU588"/>
<dbReference type="PATRIC" id="fig|107806.10.peg.593"/>
<dbReference type="eggNOG" id="COG2814">
    <property type="taxonomic scope" value="Bacteria"/>
</dbReference>
<dbReference type="HOGENOM" id="CLU_001265_19_3_6"/>
<dbReference type="BioCyc" id="BAPH107806:GBZJ-581-MONOMER"/>
<dbReference type="Proteomes" id="UP000001806">
    <property type="component" value="Chromosome"/>
</dbReference>
<dbReference type="GO" id="GO:0005886">
    <property type="term" value="C:plasma membrane"/>
    <property type="evidence" value="ECO:0007669"/>
    <property type="project" value="UniProtKB-SubCell"/>
</dbReference>
<dbReference type="GO" id="GO:0022857">
    <property type="term" value="F:transmembrane transporter activity"/>
    <property type="evidence" value="ECO:0007669"/>
    <property type="project" value="InterPro"/>
</dbReference>
<dbReference type="CDD" id="cd17324">
    <property type="entry name" value="MFS_NepI_like"/>
    <property type="match status" value="1"/>
</dbReference>
<dbReference type="Gene3D" id="1.20.1250.20">
    <property type="entry name" value="MFS general substrate transporter like domains"/>
    <property type="match status" value="2"/>
</dbReference>
<dbReference type="InterPro" id="IPR011701">
    <property type="entry name" value="MFS"/>
</dbReference>
<dbReference type="InterPro" id="IPR020846">
    <property type="entry name" value="MFS_dom"/>
</dbReference>
<dbReference type="InterPro" id="IPR036259">
    <property type="entry name" value="MFS_trans_sf"/>
</dbReference>
<dbReference type="InterPro" id="IPR005829">
    <property type="entry name" value="Sugar_transporter_CS"/>
</dbReference>
<dbReference type="PANTHER" id="PTHR43271">
    <property type="entry name" value="BLL2771 PROTEIN"/>
    <property type="match status" value="1"/>
</dbReference>
<dbReference type="PANTHER" id="PTHR43271:SF1">
    <property type="entry name" value="INNER MEMBRANE TRANSPORT PROTEIN YNFM"/>
    <property type="match status" value="1"/>
</dbReference>
<dbReference type="Pfam" id="PF07690">
    <property type="entry name" value="MFS_1"/>
    <property type="match status" value="1"/>
</dbReference>
<dbReference type="SUPFAM" id="SSF103473">
    <property type="entry name" value="MFS general substrate transporter"/>
    <property type="match status" value="1"/>
</dbReference>
<dbReference type="PROSITE" id="PS50850">
    <property type="entry name" value="MFS"/>
    <property type="match status" value="1"/>
</dbReference>
<dbReference type="PROSITE" id="PS00216">
    <property type="entry name" value="SUGAR_TRANSPORT_1"/>
    <property type="match status" value="1"/>
</dbReference>
<reference key="1">
    <citation type="journal article" date="2000" name="Nature">
        <title>Genome sequence of the endocellular bacterial symbiont of aphids Buchnera sp. APS.</title>
        <authorList>
            <person name="Shigenobu S."/>
            <person name="Watanabe H."/>
            <person name="Hattori M."/>
            <person name="Sakaki Y."/>
            <person name="Ishikawa H."/>
        </authorList>
    </citation>
    <scope>NUCLEOTIDE SEQUENCE [LARGE SCALE GENOMIC DNA]</scope>
    <source>
        <strain>APS</strain>
    </source>
</reference>
<keyword id="KW-1003">Cell membrane</keyword>
<keyword id="KW-0472">Membrane</keyword>
<keyword id="KW-1185">Reference proteome</keyword>
<keyword id="KW-0812">Transmembrane</keyword>
<keyword id="KW-1133">Transmembrane helix</keyword>
<keyword id="KW-0813">Transport</keyword>
<gene>
    <name type="ordered locus">BU588</name>
</gene>
<name>Y588_BUCAI</name>
<accession>P57648</accession>
<sequence length="410" mass="46188">MTLLKNKKQLLEKQYIKKNTKKFNQVILALFSGGFATFSILYCVQSILPMFSKQFYLTPAESSLALSAATITMSLGMLFTGPLSDIIGRKSIMSTSLFIAAMLTMICSMMTSWISIVLLRALTGLALSGVVAVAMTYISEEIHPNSLSFCMGLYISGNTIGGFLGRLLSSILAEKFSWSISLMVIGLFSFISSCFFLYFLPPSKNFLSVSINFHKCLHRFYLQLKNRVLFFLFIIGFILMGSFVTIFNYIGYRLMLEPFFLCQSSIGLLSTIYLTGVYSSPKAGVLINKYNRNNILIVSLMLMIIGLFITQYNQLFIIILGLIIFSGGFFASHSTASSWVGSYSNIAKIQATSLYLFFYYLGSSVFGTFGGFFWFHMQWLGISVFIITMLFFGVFLSFKLKQKNFKNKYF</sequence>
<organism>
    <name type="scientific">Buchnera aphidicola subsp. Acyrthosiphon pisum (strain APS)</name>
    <name type="common">Acyrthosiphon pisum symbiotic bacterium</name>
    <dbReference type="NCBI Taxonomy" id="107806"/>
    <lineage>
        <taxon>Bacteria</taxon>
        <taxon>Pseudomonadati</taxon>
        <taxon>Pseudomonadota</taxon>
        <taxon>Gammaproteobacteria</taxon>
        <taxon>Enterobacterales</taxon>
        <taxon>Erwiniaceae</taxon>
        <taxon>Buchnera</taxon>
    </lineage>
</organism>
<evidence type="ECO:0000255" key="1"/>
<evidence type="ECO:0000305" key="2"/>
<proteinExistence type="inferred from homology"/>
<protein>
    <recommendedName>
        <fullName>Uncharacterized transporter BU588</fullName>
    </recommendedName>
</protein>
<feature type="chain" id="PRO_0000173415" description="Uncharacterized transporter BU588">
    <location>
        <begin position="1"/>
        <end position="410"/>
    </location>
</feature>
<feature type="transmembrane region" description="Helical" evidence="1">
    <location>
        <begin position="27"/>
        <end position="47"/>
    </location>
</feature>
<feature type="transmembrane region" description="Helical" evidence="1">
    <location>
        <begin position="63"/>
        <end position="83"/>
    </location>
</feature>
<feature type="transmembrane region" description="Helical" evidence="1">
    <location>
        <begin position="97"/>
        <end position="117"/>
    </location>
</feature>
<feature type="transmembrane region" description="Helical" evidence="1">
    <location>
        <begin position="118"/>
        <end position="138"/>
    </location>
</feature>
<feature type="transmembrane region" description="Helical" evidence="1">
    <location>
        <begin position="145"/>
        <end position="165"/>
    </location>
</feature>
<feature type="transmembrane region" description="Helical" evidence="1">
    <location>
        <begin position="180"/>
        <end position="200"/>
    </location>
</feature>
<feature type="transmembrane region" description="Helical" evidence="1">
    <location>
        <begin position="228"/>
        <end position="248"/>
    </location>
</feature>
<feature type="transmembrane region" description="Helical" evidence="1">
    <location>
        <begin position="254"/>
        <end position="274"/>
    </location>
</feature>
<feature type="transmembrane region" description="Helical" evidence="1">
    <location>
        <begin position="293"/>
        <end position="313"/>
    </location>
</feature>
<feature type="transmembrane region" description="Helical" evidence="1">
    <location>
        <begin position="316"/>
        <end position="332"/>
    </location>
</feature>
<feature type="transmembrane region" description="Helical" evidence="1">
    <location>
        <begin position="355"/>
        <end position="375"/>
    </location>
</feature>
<feature type="transmembrane region" description="Helical" evidence="1">
    <location>
        <begin position="378"/>
        <end position="398"/>
    </location>
</feature>
<comment type="subcellular location">
    <subcellularLocation>
        <location evidence="2">Cell membrane</location>
        <topology evidence="2">Multi-pass membrane protein</topology>
    </subcellularLocation>
</comment>
<comment type="similarity">
    <text evidence="2">Belongs to the major facilitator superfamily.</text>
</comment>